<reference key="1">
    <citation type="journal article" date="2004" name="Genome Res.">
        <title>The status, quality, and expansion of the NIH full-length cDNA project: the Mammalian Gene Collection (MGC).</title>
        <authorList>
            <consortium name="The MGC Project Team"/>
        </authorList>
    </citation>
    <scope>NUCLEOTIDE SEQUENCE [LARGE SCALE MRNA]</scope>
    <source>
        <tissue>Testis</tissue>
    </source>
</reference>
<reference key="2">
    <citation type="journal article" date="2004" name="Nature">
        <title>Genome sequence of the Brown Norway rat yields insights into mammalian evolution.</title>
        <authorList>
            <person name="Gibbs R.A."/>
            <person name="Weinstock G.M."/>
            <person name="Metzker M.L."/>
            <person name="Muzny D.M."/>
            <person name="Sodergren E.J."/>
            <person name="Scherer S."/>
            <person name="Scott G."/>
            <person name="Steffen D."/>
            <person name="Worley K.C."/>
            <person name="Burch P.E."/>
            <person name="Okwuonu G."/>
            <person name="Hines S."/>
            <person name="Lewis L."/>
            <person name="Deramo C."/>
            <person name="Delgado O."/>
            <person name="Dugan-Rocha S."/>
            <person name="Miner G."/>
            <person name="Morgan M."/>
            <person name="Hawes A."/>
            <person name="Gill R."/>
            <person name="Holt R.A."/>
            <person name="Adams M.D."/>
            <person name="Amanatides P.G."/>
            <person name="Baden-Tillson H."/>
            <person name="Barnstead M."/>
            <person name="Chin S."/>
            <person name="Evans C.A."/>
            <person name="Ferriera S."/>
            <person name="Fosler C."/>
            <person name="Glodek A."/>
            <person name="Gu Z."/>
            <person name="Jennings D."/>
            <person name="Kraft C.L."/>
            <person name="Nguyen T."/>
            <person name="Pfannkoch C.M."/>
            <person name="Sitter C."/>
            <person name="Sutton G.G."/>
            <person name="Venter J.C."/>
            <person name="Woodage T."/>
            <person name="Smith D."/>
            <person name="Lee H.-M."/>
            <person name="Gustafson E."/>
            <person name="Cahill P."/>
            <person name="Kana A."/>
            <person name="Doucette-Stamm L."/>
            <person name="Weinstock K."/>
            <person name="Fechtel K."/>
            <person name="Weiss R.B."/>
            <person name="Dunn D.M."/>
            <person name="Green E.D."/>
            <person name="Blakesley R.W."/>
            <person name="Bouffard G.G."/>
            <person name="De Jong P.J."/>
            <person name="Osoegawa K."/>
            <person name="Zhu B."/>
            <person name="Marra M."/>
            <person name="Schein J."/>
            <person name="Bosdet I."/>
            <person name="Fjell C."/>
            <person name="Jones S."/>
            <person name="Krzywinski M."/>
            <person name="Mathewson C."/>
            <person name="Siddiqui A."/>
            <person name="Wye N."/>
            <person name="McPherson J."/>
            <person name="Zhao S."/>
            <person name="Fraser C.M."/>
            <person name="Shetty J."/>
            <person name="Shatsman S."/>
            <person name="Geer K."/>
            <person name="Chen Y."/>
            <person name="Abramzon S."/>
            <person name="Nierman W.C."/>
            <person name="Havlak P.H."/>
            <person name="Chen R."/>
            <person name="Durbin K.J."/>
            <person name="Egan A."/>
            <person name="Ren Y."/>
            <person name="Song X.-Z."/>
            <person name="Li B."/>
            <person name="Liu Y."/>
            <person name="Qin X."/>
            <person name="Cawley S."/>
            <person name="Cooney A.J."/>
            <person name="D'Souza L.M."/>
            <person name="Martin K."/>
            <person name="Wu J.Q."/>
            <person name="Gonzalez-Garay M.L."/>
            <person name="Jackson A.R."/>
            <person name="Kalafus K.J."/>
            <person name="McLeod M.P."/>
            <person name="Milosavljevic A."/>
            <person name="Virk D."/>
            <person name="Volkov A."/>
            <person name="Wheeler D.A."/>
            <person name="Zhang Z."/>
            <person name="Bailey J.A."/>
            <person name="Eichler E.E."/>
            <person name="Tuzun E."/>
            <person name="Birney E."/>
            <person name="Mongin E."/>
            <person name="Ureta-Vidal A."/>
            <person name="Woodwark C."/>
            <person name="Zdobnov E."/>
            <person name="Bork P."/>
            <person name="Suyama M."/>
            <person name="Torrents D."/>
            <person name="Alexandersson M."/>
            <person name="Trask B.J."/>
            <person name="Young J.M."/>
            <person name="Huang H."/>
            <person name="Wang H."/>
            <person name="Xing H."/>
            <person name="Daniels S."/>
            <person name="Gietzen D."/>
            <person name="Schmidt J."/>
            <person name="Stevens K."/>
            <person name="Vitt U."/>
            <person name="Wingrove J."/>
            <person name="Camara F."/>
            <person name="Mar Alba M."/>
            <person name="Abril J.F."/>
            <person name="Guigo R."/>
            <person name="Smit A."/>
            <person name="Dubchak I."/>
            <person name="Rubin E.M."/>
            <person name="Couronne O."/>
            <person name="Poliakov A."/>
            <person name="Huebner N."/>
            <person name="Ganten D."/>
            <person name="Goesele C."/>
            <person name="Hummel O."/>
            <person name="Kreitler T."/>
            <person name="Lee Y.-A."/>
            <person name="Monti J."/>
            <person name="Schulz H."/>
            <person name="Zimdahl H."/>
            <person name="Himmelbauer H."/>
            <person name="Lehrach H."/>
            <person name="Jacob H.J."/>
            <person name="Bromberg S."/>
            <person name="Gullings-Handley J."/>
            <person name="Jensen-Seaman M.I."/>
            <person name="Kwitek A.E."/>
            <person name="Lazar J."/>
            <person name="Pasko D."/>
            <person name="Tonellato P.J."/>
            <person name="Twigger S."/>
            <person name="Ponting C.P."/>
            <person name="Duarte J.M."/>
            <person name="Rice S."/>
            <person name="Goodstadt L."/>
            <person name="Beatson S.A."/>
            <person name="Emes R.D."/>
            <person name="Winter E.E."/>
            <person name="Webber C."/>
            <person name="Brandt P."/>
            <person name="Nyakatura G."/>
            <person name="Adetobi M."/>
            <person name="Chiaromonte F."/>
            <person name="Elnitski L."/>
            <person name="Eswara P."/>
            <person name="Hardison R.C."/>
            <person name="Hou M."/>
            <person name="Kolbe D."/>
            <person name="Makova K."/>
            <person name="Miller W."/>
            <person name="Nekrutenko A."/>
            <person name="Riemer C."/>
            <person name="Schwartz S."/>
            <person name="Taylor J."/>
            <person name="Yang S."/>
            <person name="Zhang Y."/>
            <person name="Lindpaintner K."/>
            <person name="Andrews T.D."/>
            <person name="Caccamo M."/>
            <person name="Clamp M."/>
            <person name="Clarke L."/>
            <person name="Curwen V."/>
            <person name="Durbin R.M."/>
            <person name="Eyras E."/>
            <person name="Searle S.M."/>
            <person name="Cooper G.M."/>
            <person name="Batzoglou S."/>
            <person name="Brudno M."/>
            <person name="Sidow A."/>
            <person name="Stone E.A."/>
            <person name="Payseur B.A."/>
            <person name="Bourque G."/>
            <person name="Lopez-Otin C."/>
            <person name="Puente X.S."/>
            <person name="Chakrabarti K."/>
            <person name="Chatterji S."/>
            <person name="Dewey C."/>
            <person name="Pachter L."/>
            <person name="Bray N."/>
            <person name="Yap V.B."/>
            <person name="Caspi A."/>
            <person name="Tesler G."/>
            <person name="Pevzner P.A."/>
            <person name="Haussler D."/>
            <person name="Roskin K.M."/>
            <person name="Baertsch R."/>
            <person name="Clawson H."/>
            <person name="Furey T.S."/>
            <person name="Hinrichs A.S."/>
            <person name="Karolchik D."/>
            <person name="Kent W.J."/>
            <person name="Rosenbloom K.R."/>
            <person name="Trumbower H."/>
            <person name="Weirauch M."/>
            <person name="Cooper D.N."/>
            <person name="Stenson P.D."/>
            <person name="Ma B."/>
            <person name="Brent M."/>
            <person name="Arumugam M."/>
            <person name="Shteynberg D."/>
            <person name="Copley R.R."/>
            <person name="Taylor M.S."/>
            <person name="Riethman H."/>
            <person name="Mudunuri U."/>
            <person name="Peterson J."/>
            <person name="Guyer M."/>
            <person name="Felsenfeld A."/>
            <person name="Old S."/>
            <person name="Mockrin S."/>
            <person name="Collins F.S."/>
        </authorList>
    </citation>
    <scope>NUCLEOTIDE SEQUENCE [LARGE SCALE GENOMIC DNA]</scope>
    <source>
        <strain>Brown Norway</strain>
    </source>
</reference>
<gene>
    <name type="primary">Tex56</name>
</gene>
<accession>Q6AXY2</accession>
<accession>F1LQ46</accession>
<organism>
    <name type="scientific">Rattus norvegicus</name>
    <name type="common">Rat</name>
    <dbReference type="NCBI Taxonomy" id="10116"/>
    <lineage>
        <taxon>Eukaryota</taxon>
        <taxon>Metazoa</taxon>
        <taxon>Chordata</taxon>
        <taxon>Craniata</taxon>
        <taxon>Vertebrata</taxon>
        <taxon>Euteleostomi</taxon>
        <taxon>Mammalia</taxon>
        <taxon>Eutheria</taxon>
        <taxon>Euarchontoglires</taxon>
        <taxon>Glires</taxon>
        <taxon>Rodentia</taxon>
        <taxon>Myomorpha</taxon>
        <taxon>Muroidea</taxon>
        <taxon>Muridae</taxon>
        <taxon>Murinae</taxon>
        <taxon>Rattus</taxon>
    </lineage>
</organism>
<protein>
    <recommendedName>
        <fullName>Testis expressed protein 56</fullName>
    </recommendedName>
</protein>
<dbReference type="EMBL" id="AABR07027428">
    <property type="status" value="NOT_ANNOTATED_CDS"/>
    <property type="molecule type" value="Genomic_DNA"/>
</dbReference>
<dbReference type="EMBL" id="BC079269">
    <property type="protein sequence ID" value="AAH79269.1"/>
    <property type="molecule type" value="mRNA"/>
</dbReference>
<dbReference type="RefSeq" id="NP_001013907.1">
    <property type="nucleotide sequence ID" value="NM_001013885.2"/>
</dbReference>
<dbReference type="SMR" id="Q6AXY2"/>
<dbReference type="STRING" id="10116.ENSRNOP00000039407"/>
<dbReference type="PhosphoSitePlus" id="Q6AXY2"/>
<dbReference type="PaxDb" id="10116-ENSRNOP00000039407"/>
<dbReference type="DNASU" id="291077"/>
<dbReference type="GeneID" id="291077"/>
<dbReference type="KEGG" id="rno:291077"/>
<dbReference type="UCSC" id="RGD:1307537">
    <property type="organism name" value="rat"/>
</dbReference>
<dbReference type="AGR" id="RGD:1307537"/>
<dbReference type="CTD" id="404220"/>
<dbReference type="RGD" id="1307537">
    <property type="gene designation" value="RGD1307537"/>
</dbReference>
<dbReference type="VEuPathDB" id="HostDB:ENSRNOG00000033763"/>
<dbReference type="eggNOG" id="ENOG502S904">
    <property type="taxonomic scope" value="Eukaryota"/>
</dbReference>
<dbReference type="HOGENOM" id="CLU_115219_0_0_1"/>
<dbReference type="InParanoid" id="Q6AXY2"/>
<dbReference type="OrthoDB" id="6077037at2759"/>
<dbReference type="PhylomeDB" id="Q6AXY2"/>
<dbReference type="TreeFam" id="TF341213"/>
<dbReference type="PRO" id="PR:Q6AXY2"/>
<dbReference type="Proteomes" id="UP000002494">
    <property type="component" value="Chromosome 17"/>
</dbReference>
<dbReference type="Bgee" id="ENSRNOG00000033763">
    <property type="expression patterns" value="Expressed in testis and 6 other cell types or tissues"/>
</dbReference>
<dbReference type="GO" id="GO:0003676">
    <property type="term" value="F:nucleic acid binding"/>
    <property type="evidence" value="ECO:0007669"/>
    <property type="project" value="InterPro"/>
</dbReference>
<dbReference type="InterPro" id="IPR035979">
    <property type="entry name" value="RBD_domain_sf"/>
</dbReference>
<dbReference type="InterPro" id="IPR027827">
    <property type="entry name" value="Tex56"/>
</dbReference>
<dbReference type="PANTHER" id="PTHR35968">
    <property type="entry name" value="CHROMOSOME 6 C6ORF201 HOMOLOG"/>
    <property type="match status" value="1"/>
</dbReference>
<dbReference type="PANTHER" id="PTHR35968:SF1">
    <property type="entry name" value="TESTIS EXPRESSED PROTEIN 56"/>
    <property type="match status" value="1"/>
</dbReference>
<dbReference type="Pfam" id="PF15023">
    <property type="entry name" value="DUF4523"/>
    <property type="match status" value="1"/>
</dbReference>
<dbReference type="SUPFAM" id="SSF54928">
    <property type="entry name" value="RNA-binding domain, RBD"/>
    <property type="match status" value="1"/>
</dbReference>
<sequence>MNVNIDSEQLFTEEKPKDYAQPEVLCHTFELLSNLHKLLPNRTVEVLHSYRSEEDKRKCEKPEFSGRKILARHQLPKEINLSPKPSHVPSWKRKIINNISGNWKKCRLWQKSIYEPPMGTIIVRWTKKNLQPSEDLKSVIQRLSALGPIISVTPCGRESAVVVFRDAASACKAVSAFQTMSADSMFHCSWQHRFMSKNKTWSRRYPSKIHAEKKEKHP</sequence>
<evidence type="ECO:0000305" key="1"/>
<proteinExistence type="evidence at transcript level"/>
<name>TEX56_RAT</name>
<keyword id="KW-1185">Reference proteome</keyword>
<feature type="chain" id="PRO_0000297590" description="Testis expressed protein 56">
    <location>
        <begin position="1"/>
        <end position="218"/>
    </location>
</feature>
<feature type="sequence conflict" description="In Ref. 1; AAH79269." evidence="1" ref="1">
    <original>R</original>
    <variation>IE</variation>
    <location>
        <position position="67"/>
    </location>
</feature>